<evidence type="ECO:0000255" key="1">
    <source>
        <dbReference type="HAMAP-Rule" id="MF_00651"/>
    </source>
</evidence>
<gene>
    <name type="ordered locus">LI0503</name>
</gene>
<reference key="1">
    <citation type="submission" date="2005-11" db="EMBL/GenBank/DDBJ databases">
        <title>The complete genome sequence of Lawsonia intracellularis: the causative agent of proliferative enteropathy.</title>
        <authorList>
            <person name="Kaur K."/>
            <person name="Zhang Q."/>
            <person name="Beckler D."/>
            <person name="Munir S."/>
            <person name="Li L."/>
            <person name="Kinsley K."/>
            <person name="Herron L."/>
            <person name="Peterson A."/>
            <person name="May B."/>
            <person name="Singh S."/>
            <person name="Gebhart C."/>
            <person name="Kapur V."/>
        </authorList>
    </citation>
    <scope>NUCLEOTIDE SEQUENCE [LARGE SCALE GENOMIC DNA]</scope>
    <source>
        <strain>PHE/MN1-00</strain>
    </source>
</reference>
<name>YQGF_LAWIP</name>
<accession>Q1MR19</accession>
<comment type="function">
    <text evidence="1">Could be a nuclease involved in processing of the 5'-end of pre-16S rRNA.</text>
</comment>
<comment type="subcellular location">
    <subcellularLocation>
        <location evidence="1">Cytoplasm</location>
    </subcellularLocation>
</comment>
<comment type="similarity">
    <text evidence="1">Belongs to the YqgF nuclease family.</text>
</comment>
<feature type="chain" id="PRO_0000257545" description="Putative pre-16S rRNA nuclease">
    <location>
        <begin position="1"/>
        <end position="142"/>
    </location>
</feature>
<organism>
    <name type="scientific">Lawsonia intracellularis (strain PHE/MN1-00)</name>
    <dbReference type="NCBI Taxonomy" id="363253"/>
    <lineage>
        <taxon>Bacteria</taxon>
        <taxon>Pseudomonadati</taxon>
        <taxon>Thermodesulfobacteriota</taxon>
        <taxon>Desulfovibrionia</taxon>
        <taxon>Desulfovibrionales</taxon>
        <taxon>Desulfovibrionaceae</taxon>
        <taxon>Lawsonia</taxon>
    </lineage>
</organism>
<protein>
    <recommendedName>
        <fullName evidence="1">Putative pre-16S rRNA nuclease</fullName>
        <ecNumber evidence="1">3.1.-.-</ecNumber>
    </recommendedName>
</protein>
<sequence>MKYVAIDYGTKYTGIAVSDSMGVFAFPKQSIIMTTQKEFFIKLVELIYVESPDALVVGLPVLFDNSETLITRQVRNFIKRLKHKIMLPVFLMKEILSSYEAKLDLQSVGYRKNKIKSVLDQQAAVRILQSFLDQSESERVQV</sequence>
<proteinExistence type="inferred from homology"/>
<keyword id="KW-0963">Cytoplasm</keyword>
<keyword id="KW-0378">Hydrolase</keyword>
<keyword id="KW-0540">Nuclease</keyword>
<keyword id="KW-1185">Reference proteome</keyword>
<keyword id="KW-0690">Ribosome biogenesis</keyword>
<dbReference type="EC" id="3.1.-.-" evidence="1"/>
<dbReference type="EMBL" id="AM180252">
    <property type="protein sequence ID" value="CAJ54557.1"/>
    <property type="molecule type" value="Genomic_DNA"/>
</dbReference>
<dbReference type="RefSeq" id="WP_011526587.1">
    <property type="nucleotide sequence ID" value="NC_008011.1"/>
</dbReference>
<dbReference type="SMR" id="Q1MR19"/>
<dbReference type="STRING" id="363253.LI0503"/>
<dbReference type="KEGG" id="lip:LI0503"/>
<dbReference type="eggNOG" id="COG0816">
    <property type="taxonomic scope" value="Bacteria"/>
</dbReference>
<dbReference type="HOGENOM" id="CLU_098240_2_2_7"/>
<dbReference type="OrthoDB" id="9796140at2"/>
<dbReference type="Proteomes" id="UP000002430">
    <property type="component" value="Chromosome"/>
</dbReference>
<dbReference type="GO" id="GO:0005829">
    <property type="term" value="C:cytosol"/>
    <property type="evidence" value="ECO:0007669"/>
    <property type="project" value="TreeGrafter"/>
</dbReference>
<dbReference type="GO" id="GO:0004518">
    <property type="term" value="F:nuclease activity"/>
    <property type="evidence" value="ECO:0007669"/>
    <property type="project" value="UniProtKB-KW"/>
</dbReference>
<dbReference type="GO" id="GO:0000967">
    <property type="term" value="P:rRNA 5'-end processing"/>
    <property type="evidence" value="ECO:0007669"/>
    <property type="project" value="UniProtKB-UniRule"/>
</dbReference>
<dbReference type="CDD" id="cd16964">
    <property type="entry name" value="YqgF"/>
    <property type="match status" value="1"/>
</dbReference>
<dbReference type="Gene3D" id="3.30.420.140">
    <property type="entry name" value="YqgF/RNase H-like domain"/>
    <property type="match status" value="1"/>
</dbReference>
<dbReference type="HAMAP" id="MF_00651">
    <property type="entry name" value="Nuclease_YqgF"/>
    <property type="match status" value="1"/>
</dbReference>
<dbReference type="InterPro" id="IPR012337">
    <property type="entry name" value="RNaseH-like_sf"/>
</dbReference>
<dbReference type="InterPro" id="IPR005227">
    <property type="entry name" value="YqgF"/>
</dbReference>
<dbReference type="InterPro" id="IPR006641">
    <property type="entry name" value="YqgF/RNaseH-like_dom"/>
</dbReference>
<dbReference type="InterPro" id="IPR037027">
    <property type="entry name" value="YqgF/RNaseH-like_dom_sf"/>
</dbReference>
<dbReference type="NCBIfam" id="TIGR00250">
    <property type="entry name" value="RNAse_H_YqgF"/>
    <property type="match status" value="1"/>
</dbReference>
<dbReference type="PANTHER" id="PTHR33317">
    <property type="entry name" value="POLYNUCLEOTIDYL TRANSFERASE, RIBONUCLEASE H-LIKE SUPERFAMILY PROTEIN"/>
    <property type="match status" value="1"/>
</dbReference>
<dbReference type="PANTHER" id="PTHR33317:SF4">
    <property type="entry name" value="POLYNUCLEOTIDYL TRANSFERASE, RIBONUCLEASE H-LIKE SUPERFAMILY PROTEIN"/>
    <property type="match status" value="1"/>
</dbReference>
<dbReference type="Pfam" id="PF03652">
    <property type="entry name" value="RuvX"/>
    <property type="match status" value="1"/>
</dbReference>
<dbReference type="SMART" id="SM00732">
    <property type="entry name" value="YqgFc"/>
    <property type="match status" value="1"/>
</dbReference>
<dbReference type="SUPFAM" id="SSF53098">
    <property type="entry name" value="Ribonuclease H-like"/>
    <property type="match status" value="1"/>
</dbReference>